<feature type="chain" id="PRO_0000139660" description="Xanthine-guanine phosphoribosyltransferase">
    <location>
        <begin position="1"/>
        <end position="158"/>
    </location>
</feature>
<feature type="binding site" evidence="1">
    <location>
        <begin position="38"/>
        <end position="39"/>
    </location>
    <ligand>
        <name>5-phospho-alpha-D-ribose 1-diphosphate</name>
        <dbReference type="ChEBI" id="CHEBI:58017"/>
    </ligand>
</feature>
<feature type="binding site" evidence="1">
    <location>
        <begin position="90"/>
        <end position="98"/>
    </location>
    <ligand>
        <name>5-phospho-alpha-D-ribose 1-diphosphate</name>
        <dbReference type="ChEBI" id="CHEBI:58017"/>
    </ligand>
</feature>
<feature type="binding site" evidence="1">
    <location>
        <position position="91"/>
    </location>
    <ligand>
        <name>Mg(2+)</name>
        <dbReference type="ChEBI" id="CHEBI:18420"/>
    </ligand>
</feature>
<feature type="binding site" evidence="1">
    <location>
        <begin position="94"/>
        <end position="98"/>
    </location>
    <ligand>
        <name>GMP</name>
        <dbReference type="ChEBI" id="CHEBI:58115"/>
    </ligand>
</feature>
<feature type="binding site" evidence="1">
    <location>
        <position position="94"/>
    </location>
    <ligand>
        <name>guanine</name>
        <dbReference type="ChEBI" id="CHEBI:16235"/>
    </ligand>
</feature>
<feature type="binding site" evidence="1">
    <location>
        <position position="94"/>
    </location>
    <ligand>
        <name>xanthine</name>
        <dbReference type="ChEBI" id="CHEBI:17712"/>
    </ligand>
</feature>
<feature type="binding site" evidence="1">
    <location>
        <begin position="136"/>
        <end position="137"/>
    </location>
    <ligand>
        <name>GMP</name>
        <dbReference type="ChEBI" id="CHEBI:58115"/>
    </ligand>
</feature>
<feature type="binding site" evidence="1">
    <location>
        <position position="137"/>
    </location>
    <ligand>
        <name>guanine</name>
        <dbReference type="ChEBI" id="CHEBI:16235"/>
    </ligand>
</feature>
<feature type="binding site" evidence="1">
    <location>
        <position position="137"/>
    </location>
    <ligand>
        <name>xanthine</name>
        <dbReference type="ChEBI" id="CHEBI:17712"/>
    </ligand>
</feature>
<proteinExistence type="inferred from homology"/>
<organism>
    <name type="scientific">Buchnera aphidicola subsp. Acyrthosiphon pisum (strain APS)</name>
    <name type="common">Acyrthosiphon pisum symbiotic bacterium</name>
    <dbReference type="NCBI Taxonomy" id="107806"/>
    <lineage>
        <taxon>Bacteria</taxon>
        <taxon>Pseudomonadati</taxon>
        <taxon>Pseudomonadota</taxon>
        <taxon>Gammaproteobacteria</taxon>
        <taxon>Enterobacterales</taxon>
        <taxon>Erwiniaceae</taxon>
        <taxon>Buchnera</taxon>
    </lineage>
</organism>
<keyword id="KW-0997">Cell inner membrane</keyword>
<keyword id="KW-1003">Cell membrane</keyword>
<keyword id="KW-0328">Glycosyltransferase</keyword>
<keyword id="KW-0460">Magnesium</keyword>
<keyword id="KW-0472">Membrane</keyword>
<keyword id="KW-0479">Metal-binding</keyword>
<keyword id="KW-0660">Purine salvage</keyword>
<keyword id="KW-1185">Reference proteome</keyword>
<keyword id="KW-0808">Transferase</keyword>
<accession>P57339</accession>
<protein>
    <recommendedName>
        <fullName evidence="1">Xanthine-guanine phosphoribosyltransferase</fullName>
        <shortName evidence="1">XGPRT</shortName>
        <ecNumber evidence="1">2.4.2.-</ecNumber>
        <ecNumber evidence="1">2.4.2.22</ecNumber>
    </recommendedName>
    <alternativeName>
        <fullName evidence="1">Xanthine phosphoribosyltransferase</fullName>
    </alternativeName>
</protein>
<sequence length="158" mass="18064">MSEKYIVTWDMLQIHTRKLANRLVKKIHSWNGIIAVSRGGLVPSALLARELGLRCVDTVCIESYNYDCLKENRKIIKKAEGNGEKIIVIDDLVDTGGTAKIIRKLYPKACFVTIFAKPMGRSLVDNYIIDIPQNVWIEQPWDMSISYIPPLIQNYKIK</sequence>
<dbReference type="EC" id="2.4.2.-" evidence="1"/>
<dbReference type="EC" id="2.4.2.22" evidence="1"/>
<dbReference type="EMBL" id="BA000003">
    <property type="protein sequence ID" value="BAB12961.1"/>
    <property type="status" value="ALT_INIT"/>
    <property type="molecule type" value="Genomic_DNA"/>
</dbReference>
<dbReference type="RefSeq" id="NP_240075.2">
    <property type="nucleotide sequence ID" value="NC_002528.1"/>
</dbReference>
<dbReference type="RefSeq" id="WP_009874205.1">
    <property type="nucleotide sequence ID" value="NZ_AP036055.1"/>
</dbReference>
<dbReference type="SMR" id="P57339"/>
<dbReference type="STRING" id="563178.BUAP5A_246"/>
<dbReference type="EnsemblBacteria" id="BAB12961">
    <property type="protein sequence ID" value="BAB12961"/>
    <property type="gene ID" value="BAB12961"/>
</dbReference>
<dbReference type="KEGG" id="buc:BU251"/>
<dbReference type="PATRIC" id="fig|107806.10.peg.261"/>
<dbReference type="eggNOG" id="COG2236">
    <property type="taxonomic scope" value="Bacteria"/>
</dbReference>
<dbReference type="HOGENOM" id="CLU_080904_3_0_6"/>
<dbReference type="UniPathway" id="UPA00602">
    <property type="reaction ID" value="UER00658"/>
</dbReference>
<dbReference type="UniPathway" id="UPA00909">
    <property type="reaction ID" value="UER00887"/>
</dbReference>
<dbReference type="Proteomes" id="UP000001806">
    <property type="component" value="Chromosome"/>
</dbReference>
<dbReference type="GO" id="GO:0005829">
    <property type="term" value="C:cytosol"/>
    <property type="evidence" value="ECO:0007669"/>
    <property type="project" value="TreeGrafter"/>
</dbReference>
<dbReference type="GO" id="GO:0005886">
    <property type="term" value="C:plasma membrane"/>
    <property type="evidence" value="ECO:0007669"/>
    <property type="project" value="UniProtKB-SubCell"/>
</dbReference>
<dbReference type="GO" id="GO:0052657">
    <property type="term" value="F:guanine phosphoribosyltransferase activity"/>
    <property type="evidence" value="ECO:0007669"/>
    <property type="project" value="RHEA"/>
</dbReference>
<dbReference type="GO" id="GO:0004422">
    <property type="term" value="F:hypoxanthine phosphoribosyltransferase activity"/>
    <property type="evidence" value="ECO:0007669"/>
    <property type="project" value="TreeGrafter"/>
</dbReference>
<dbReference type="GO" id="GO:0000287">
    <property type="term" value="F:magnesium ion binding"/>
    <property type="evidence" value="ECO:0007669"/>
    <property type="project" value="UniProtKB-UniRule"/>
</dbReference>
<dbReference type="GO" id="GO:0000310">
    <property type="term" value="F:xanthine phosphoribosyltransferase activity"/>
    <property type="evidence" value="ECO:0007669"/>
    <property type="project" value="UniProtKB-UniRule"/>
</dbReference>
<dbReference type="GO" id="GO:0032263">
    <property type="term" value="P:GMP salvage"/>
    <property type="evidence" value="ECO:0007669"/>
    <property type="project" value="UniProtKB-UniRule"/>
</dbReference>
<dbReference type="GO" id="GO:0032264">
    <property type="term" value="P:IMP salvage"/>
    <property type="evidence" value="ECO:0007669"/>
    <property type="project" value="TreeGrafter"/>
</dbReference>
<dbReference type="GO" id="GO:0006166">
    <property type="term" value="P:purine ribonucleoside salvage"/>
    <property type="evidence" value="ECO:0007669"/>
    <property type="project" value="UniProtKB-KW"/>
</dbReference>
<dbReference type="GO" id="GO:0032265">
    <property type="term" value="P:XMP salvage"/>
    <property type="evidence" value="ECO:0007669"/>
    <property type="project" value="UniProtKB-UniRule"/>
</dbReference>
<dbReference type="CDD" id="cd06223">
    <property type="entry name" value="PRTases_typeI"/>
    <property type="match status" value="1"/>
</dbReference>
<dbReference type="Gene3D" id="3.40.50.2020">
    <property type="match status" value="1"/>
</dbReference>
<dbReference type="HAMAP" id="MF_01903">
    <property type="entry name" value="XGPRT"/>
    <property type="match status" value="1"/>
</dbReference>
<dbReference type="InterPro" id="IPR000836">
    <property type="entry name" value="PRibTrfase_dom"/>
</dbReference>
<dbReference type="InterPro" id="IPR029057">
    <property type="entry name" value="PRTase-like"/>
</dbReference>
<dbReference type="InterPro" id="IPR023747">
    <property type="entry name" value="Xanthine_Guanine_PRibTrfase"/>
</dbReference>
<dbReference type="NCBIfam" id="NF006613">
    <property type="entry name" value="PRK09177.1"/>
    <property type="match status" value="1"/>
</dbReference>
<dbReference type="PANTHER" id="PTHR39563">
    <property type="entry name" value="XANTHINE PHOSPHORIBOSYLTRANSFERASE"/>
    <property type="match status" value="1"/>
</dbReference>
<dbReference type="PANTHER" id="PTHR39563:SF1">
    <property type="entry name" value="XANTHINE-GUANINE PHOSPHORIBOSYLTRANSFERASE"/>
    <property type="match status" value="1"/>
</dbReference>
<dbReference type="Pfam" id="PF00156">
    <property type="entry name" value="Pribosyltran"/>
    <property type="match status" value="1"/>
</dbReference>
<dbReference type="SUPFAM" id="SSF53271">
    <property type="entry name" value="PRTase-like"/>
    <property type="match status" value="1"/>
</dbReference>
<dbReference type="PROSITE" id="PS00103">
    <property type="entry name" value="PUR_PYR_PR_TRANSFER"/>
    <property type="match status" value="1"/>
</dbReference>
<reference key="1">
    <citation type="journal article" date="2000" name="Nature">
        <title>Genome sequence of the endocellular bacterial symbiont of aphids Buchnera sp. APS.</title>
        <authorList>
            <person name="Shigenobu S."/>
            <person name="Watanabe H."/>
            <person name="Hattori M."/>
            <person name="Sakaki Y."/>
            <person name="Ishikawa H."/>
        </authorList>
    </citation>
    <scope>NUCLEOTIDE SEQUENCE [LARGE SCALE GENOMIC DNA]</scope>
    <source>
        <strain>APS</strain>
    </source>
</reference>
<name>XGPT_BUCAI</name>
<gene>
    <name evidence="1" type="primary">gpt</name>
    <name type="ordered locus">BU251</name>
</gene>
<comment type="function">
    <text evidence="1">Purine salvage pathway enzyme that catalyzes the transfer of the ribosyl-5-phosphate group from 5-phospho-alpha-D-ribose 1-diphosphate (PRPP) to the N9 position of the 6-oxopurines guanine and xanthine to form the corresponding ribonucleotides GMP (guanosine 5'-monophosphate) and XMP (xanthosine 5'-monophosphate), with the release of PPi. To a lesser extent, also acts on hypoxanthine.</text>
</comment>
<comment type="catalytic activity">
    <reaction evidence="1">
        <text>GMP + diphosphate = guanine + 5-phospho-alpha-D-ribose 1-diphosphate</text>
        <dbReference type="Rhea" id="RHEA:25424"/>
        <dbReference type="ChEBI" id="CHEBI:16235"/>
        <dbReference type="ChEBI" id="CHEBI:33019"/>
        <dbReference type="ChEBI" id="CHEBI:58017"/>
        <dbReference type="ChEBI" id="CHEBI:58115"/>
    </reaction>
    <physiologicalReaction direction="right-to-left" evidence="1">
        <dbReference type="Rhea" id="RHEA:25426"/>
    </physiologicalReaction>
</comment>
<comment type="catalytic activity">
    <reaction evidence="1">
        <text>XMP + diphosphate = xanthine + 5-phospho-alpha-D-ribose 1-diphosphate</text>
        <dbReference type="Rhea" id="RHEA:10800"/>
        <dbReference type="ChEBI" id="CHEBI:17712"/>
        <dbReference type="ChEBI" id="CHEBI:33019"/>
        <dbReference type="ChEBI" id="CHEBI:57464"/>
        <dbReference type="ChEBI" id="CHEBI:58017"/>
        <dbReference type="EC" id="2.4.2.22"/>
    </reaction>
    <physiologicalReaction direction="right-to-left" evidence="1">
        <dbReference type="Rhea" id="RHEA:10802"/>
    </physiologicalReaction>
</comment>
<comment type="catalytic activity">
    <reaction evidence="1">
        <text>IMP + diphosphate = hypoxanthine + 5-phospho-alpha-D-ribose 1-diphosphate</text>
        <dbReference type="Rhea" id="RHEA:17973"/>
        <dbReference type="ChEBI" id="CHEBI:17368"/>
        <dbReference type="ChEBI" id="CHEBI:33019"/>
        <dbReference type="ChEBI" id="CHEBI:58017"/>
        <dbReference type="ChEBI" id="CHEBI:58053"/>
    </reaction>
    <physiologicalReaction direction="right-to-left" evidence="1">
        <dbReference type="Rhea" id="RHEA:17975"/>
    </physiologicalReaction>
</comment>
<comment type="cofactor">
    <cofactor evidence="1">
        <name>Mg(2+)</name>
        <dbReference type="ChEBI" id="CHEBI:18420"/>
    </cofactor>
</comment>
<comment type="pathway">
    <text evidence="1">Purine metabolism; GMP biosynthesis via salvage pathway; GMP from guanine: step 1/1.</text>
</comment>
<comment type="pathway">
    <text evidence="1">Purine metabolism; XMP biosynthesis via salvage pathway; XMP from xanthine: step 1/1.</text>
</comment>
<comment type="subunit">
    <text evidence="1">Homotetramer.</text>
</comment>
<comment type="subcellular location">
    <subcellularLocation>
        <location evidence="1">Cell inner membrane</location>
        <topology evidence="1">Peripheral membrane protein</topology>
    </subcellularLocation>
</comment>
<comment type="similarity">
    <text evidence="1">Belongs to the purine/pyrimidine phosphoribosyltransferase family. XGPT subfamily.</text>
</comment>
<comment type="sequence caution" evidence="2">
    <conflict type="erroneous initiation">
        <sequence resource="EMBL-CDS" id="BAB12961"/>
    </conflict>
</comment>
<evidence type="ECO:0000255" key="1">
    <source>
        <dbReference type="HAMAP-Rule" id="MF_01903"/>
    </source>
</evidence>
<evidence type="ECO:0000305" key="2"/>